<organism>
    <name type="scientific">Saccharomyces cerevisiae (strain ATCC 204508 / S288c)</name>
    <name type="common">Baker's yeast</name>
    <dbReference type="NCBI Taxonomy" id="559292"/>
    <lineage>
        <taxon>Eukaryota</taxon>
        <taxon>Fungi</taxon>
        <taxon>Dikarya</taxon>
        <taxon>Ascomycota</taxon>
        <taxon>Saccharomycotina</taxon>
        <taxon>Saccharomycetes</taxon>
        <taxon>Saccharomycetales</taxon>
        <taxon>Saccharomycetaceae</taxon>
        <taxon>Saccharomyces</taxon>
    </lineage>
</organism>
<gene>
    <name type="ordered locus">YAL056C-A</name>
    <name type="ORF">YAL058C-A</name>
</gene>
<accession>O13513</accession>
<sequence>MLTIYKREAVVVQLLRPCYKLTLVHYVNTTQQRTDVVKSTTAAVSTNFRGCSNMRSIMRSNGLGDSLSLWKVVCRFPSLLFMNLRSVGPSEPLNARSLISQVLFPIICASVTFLPT</sequence>
<comment type="miscellaneous">
    <text evidence="1">Partially overlaps CNE1.</text>
</comment>
<comment type="caution">
    <text evidence="2">Product of a dubious gene prediction unlikely to encode a functional protein. Because of that it is not part of the S.cerevisiae S288c complete/reference proteome set.</text>
</comment>
<proteinExistence type="uncertain"/>
<protein>
    <recommendedName>
        <fullName>Putative uncharacterized protein YAL056C-A</fullName>
    </recommendedName>
</protein>
<feature type="chain" id="PRO_0000299656" description="Putative uncharacterized protein YAL056C-A">
    <location>
        <begin position="1"/>
        <end position="116"/>
    </location>
</feature>
<dbReference type="EMBL" id="U12980">
    <property type="protein sequence ID" value="AAC05011.1"/>
    <property type="molecule type" value="Genomic_DNA"/>
</dbReference>
<dbReference type="PIR" id="S53561">
    <property type="entry name" value="S53561"/>
</dbReference>
<dbReference type="STRING" id="4932.YAL056C-A"/>
<dbReference type="PaxDb" id="4932-YAL056C-A"/>
<dbReference type="TopDownProteomics" id="O13513"/>
<dbReference type="EnsemblFungi" id="YAL056C-A_mRNA">
    <property type="protein sequence ID" value="YAL056C-A"/>
    <property type="gene ID" value="YAL056C-A"/>
</dbReference>
<dbReference type="AGR" id="SGD:S000002139"/>
<dbReference type="SGD" id="S000002139">
    <property type="gene designation" value="YAL056C-A"/>
</dbReference>
<dbReference type="HOGENOM" id="CLU_2098743_0_0_1"/>
<evidence type="ECO:0000305" key="1"/>
<evidence type="ECO:0000305" key="2">
    <source>
    </source>
</evidence>
<reference key="1">
    <citation type="journal article" date="1995" name="Proc. Natl. Acad. Sci. U.S.A.">
        <title>The nucleotide sequence of chromosome I from Saccharomyces cerevisiae.</title>
        <authorList>
            <person name="Bussey H."/>
            <person name="Kaback D.B."/>
            <person name="Zhong W.-W."/>
            <person name="Vo D.H."/>
            <person name="Clark M.W."/>
            <person name="Fortin N."/>
            <person name="Hall J."/>
            <person name="Ouellette B.F.F."/>
            <person name="Keng T."/>
            <person name="Barton A.B."/>
            <person name="Su Y."/>
            <person name="Davies C.J."/>
            <person name="Storms R.K."/>
        </authorList>
    </citation>
    <scope>NUCLEOTIDE SEQUENCE [LARGE SCALE GENOMIC DNA]</scope>
    <source>
        <strain>ATCC 204508 / S288c</strain>
    </source>
</reference>
<reference key="2">
    <citation type="journal article" date="2014" name="G3 (Bethesda)">
        <title>The reference genome sequence of Saccharomyces cerevisiae: Then and now.</title>
        <authorList>
            <person name="Engel S.R."/>
            <person name="Dietrich F.S."/>
            <person name="Fisk D.G."/>
            <person name="Binkley G."/>
            <person name="Balakrishnan R."/>
            <person name="Costanzo M.C."/>
            <person name="Dwight S.S."/>
            <person name="Hitz B.C."/>
            <person name="Karra K."/>
            <person name="Nash R.S."/>
            <person name="Weng S."/>
            <person name="Wong E.D."/>
            <person name="Lloyd P."/>
            <person name="Skrzypek M.S."/>
            <person name="Miyasato S.R."/>
            <person name="Simison M."/>
            <person name="Cherry J.M."/>
        </authorList>
    </citation>
    <scope>GENOME REANNOTATION</scope>
    <source>
        <strain>ATCC 204508 / S288c</strain>
    </source>
</reference>
<name>YA056_YEAST</name>